<gene>
    <name type="primary">trpG</name>
    <name type="ordered locus">TTHA1843</name>
</gene>
<proteinExistence type="inferred from homology"/>
<comment type="function">
    <text evidence="1">Part of a heterotetrameric complex that catalyzes the two-step biosynthesis of anthranilate, an intermediate in the biosynthesis of L-tryptophan. In the first step, the glutamine-binding beta subunit (TrpG) of anthranilate synthase (AS) provides the glutamine amidotransferase activity which generates ammonia as a substrate that, along with chorismate, is used in the second step, catalyzed by the large alpha subunit of AS (TrpE) to produce anthranilate. In the absence of TrpG, TrpE can synthesize anthranilate directly from chorismate and high concentrations of ammonia (By similarity).</text>
</comment>
<comment type="catalytic activity">
    <reaction>
        <text>chorismate + L-glutamine = anthranilate + pyruvate + L-glutamate + H(+)</text>
        <dbReference type="Rhea" id="RHEA:21732"/>
        <dbReference type="ChEBI" id="CHEBI:15361"/>
        <dbReference type="ChEBI" id="CHEBI:15378"/>
        <dbReference type="ChEBI" id="CHEBI:16567"/>
        <dbReference type="ChEBI" id="CHEBI:29748"/>
        <dbReference type="ChEBI" id="CHEBI:29985"/>
        <dbReference type="ChEBI" id="CHEBI:58359"/>
        <dbReference type="EC" id="4.1.3.27"/>
    </reaction>
</comment>
<comment type="pathway">
    <text>Amino-acid biosynthesis; L-tryptophan biosynthesis; L-tryptophan from chorismate: step 1/5.</text>
</comment>
<comment type="subunit">
    <text evidence="1">Heterotetramer consisting of two non-identical subunits: a beta subunit (TrpG) and a large alpha subunit (TrpE).</text>
</comment>
<dbReference type="EC" id="4.1.3.27"/>
<dbReference type="EMBL" id="X07744">
    <property type="protein sequence ID" value="CAA30567.1"/>
    <property type="molecule type" value="Genomic_DNA"/>
</dbReference>
<dbReference type="EMBL" id="AP008226">
    <property type="protein sequence ID" value="BAD71666.1"/>
    <property type="molecule type" value="Genomic_DNA"/>
</dbReference>
<dbReference type="RefSeq" id="YP_145109.1">
    <property type="nucleotide sequence ID" value="NC_006461.1"/>
</dbReference>
<dbReference type="SMR" id="P05379"/>
<dbReference type="MEROPS" id="C26.955"/>
<dbReference type="EnsemblBacteria" id="BAD71666">
    <property type="protein sequence ID" value="BAD71666"/>
    <property type="gene ID" value="BAD71666"/>
</dbReference>
<dbReference type="KEGG" id="ttj:TTHA1843"/>
<dbReference type="PATRIC" id="fig|300852.9.peg.1814"/>
<dbReference type="eggNOG" id="COG0512">
    <property type="taxonomic scope" value="Bacteria"/>
</dbReference>
<dbReference type="HOGENOM" id="CLU_014340_1_2_0"/>
<dbReference type="PhylomeDB" id="P05379"/>
<dbReference type="UniPathway" id="UPA00035">
    <property type="reaction ID" value="UER00040"/>
</dbReference>
<dbReference type="Proteomes" id="UP000000532">
    <property type="component" value="Chromosome"/>
</dbReference>
<dbReference type="GO" id="GO:0005829">
    <property type="term" value="C:cytosol"/>
    <property type="evidence" value="ECO:0007669"/>
    <property type="project" value="TreeGrafter"/>
</dbReference>
<dbReference type="GO" id="GO:0004049">
    <property type="term" value="F:anthranilate synthase activity"/>
    <property type="evidence" value="ECO:0007669"/>
    <property type="project" value="UniProtKB-EC"/>
</dbReference>
<dbReference type="GO" id="GO:0000162">
    <property type="term" value="P:L-tryptophan biosynthetic process"/>
    <property type="evidence" value="ECO:0007669"/>
    <property type="project" value="UniProtKB-UniPathway"/>
</dbReference>
<dbReference type="CDD" id="cd01743">
    <property type="entry name" value="GATase1_Anthranilate_Synthase"/>
    <property type="match status" value="1"/>
</dbReference>
<dbReference type="FunFam" id="3.40.50.880:FF:000003">
    <property type="entry name" value="Anthranilate synthase component II"/>
    <property type="match status" value="1"/>
</dbReference>
<dbReference type="Gene3D" id="3.40.50.880">
    <property type="match status" value="1"/>
</dbReference>
<dbReference type="InterPro" id="IPR050472">
    <property type="entry name" value="Anth_synth/Amidotransfase"/>
</dbReference>
<dbReference type="InterPro" id="IPR029062">
    <property type="entry name" value="Class_I_gatase-like"/>
</dbReference>
<dbReference type="InterPro" id="IPR017926">
    <property type="entry name" value="GATASE"/>
</dbReference>
<dbReference type="InterPro" id="IPR006221">
    <property type="entry name" value="TrpG/PapA_dom"/>
</dbReference>
<dbReference type="NCBIfam" id="TIGR00566">
    <property type="entry name" value="trpG_papA"/>
    <property type="match status" value="1"/>
</dbReference>
<dbReference type="PANTHER" id="PTHR43418:SF4">
    <property type="entry name" value="MULTIFUNCTIONAL TRYPTOPHAN BIOSYNTHESIS PROTEIN"/>
    <property type="match status" value="1"/>
</dbReference>
<dbReference type="PANTHER" id="PTHR43418">
    <property type="entry name" value="MULTIFUNCTIONAL TRYPTOPHAN BIOSYNTHESIS PROTEIN-RELATED"/>
    <property type="match status" value="1"/>
</dbReference>
<dbReference type="Pfam" id="PF00117">
    <property type="entry name" value="GATase"/>
    <property type="match status" value="1"/>
</dbReference>
<dbReference type="PRINTS" id="PR00097">
    <property type="entry name" value="ANTSNTHASEII"/>
</dbReference>
<dbReference type="PRINTS" id="PR00099">
    <property type="entry name" value="CPSGATASE"/>
</dbReference>
<dbReference type="PRINTS" id="PR00096">
    <property type="entry name" value="GATASE"/>
</dbReference>
<dbReference type="SUPFAM" id="SSF52317">
    <property type="entry name" value="Class I glutamine amidotransferase-like"/>
    <property type="match status" value="1"/>
</dbReference>
<dbReference type="PROSITE" id="PS51273">
    <property type="entry name" value="GATASE_TYPE_1"/>
    <property type="match status" value="1"/>
</dbReference>
<sequence length="204" mass="22515">MAANGAKGRKVMRVLVVDNYDSFTYNLVQYLGELGAEPIVWRNDRFRLEEVEALDPDRILISPGPCTPFEAGLSVPLVQRYAPRYPILGVCLGHQAIGAAFGGKVVPAPVLMHGKVSPIHHDGTGVFRGLDSPFPATRYHSLAVVEVPEALVVNAWAEEAGGRTVMGFRHRDYPTHGVQFHPESYLTEAGKLILKNFLEDPWTR</sequence>
<organism>
    <name type="scientific">Thermus thermophilus (strain ATCC 27634 / DSM 579 / HB8)</name>
    <dbReference type="NCBI Taxonomy" id="300852"/>
    <lineage>
        <taxon>Bacteria</taxon>
        <taxon>Thermotogati</taxon>
        <taxon>Deinococcota</taxon>
        <taxon>Deinococci</taxon>
        <taxon>Thermales</taxon>
        <taxon>Thermaceae</taxon>
        <taxon>Thermus</taxon>
    </lineage>
</organism>
<accession>P05379</accession>
<accession>Q5SH87</accession>
<feature type="chain" id="PRO_0000056902" description="Anthranilate synthase component 2">
    <location>
        <begin position="1"/>
        <end position="204"/>
    </location>
</feature>
<feature type="domain" description="Glutamine amidotransferase type-1" evidence="3">
    <location>
        <begin position="13"/>
        <end position="204"/>
    </location>
</feature>
<feature type="active site" description="Nucleophile; for GATase activity" evidence="3">
    <location>
        <position position="91"/>
    </location>
</feature>
<feature type="active site" description="For GATase activity" evidence="3">
    <location>
        <position position="181"/>
    </location>
</feature>
<feature type="active site" description="For GATase activity" evidence="3">
    <location>
        <position position="183"/>
    </location>
</feature>
<feature type="binding site" evidence="2">
    <location>
        <begin position="64"/>
        <end position="66"/>
    </location>
    <ligand>
        <name>L-glutamine</name>
        <dbReference type="ChEBI" id="CHEBI:58359"/>
    </ligand>
</feature>
<feature type="binding site" evidence="2">
    <location>
        <position position="95"/>
    </location>
    <ligand>
        <name>L-glutamine</name>
        <dbReference type="ChEBI" id="CHEBI:58359"/>
    </ligand>
</feature>
<feature type="binding site" evidence="2">
    <location>
        <begin position="141"/>
        <end position="142"/>
    </location>
    <ligand>
        <name>L-glutamine</name>
        <dbReference type="ChEBI" id="CHEBI:58359"/>
    </ligand>
</feature>
<reference key="1">
    <citation type="journal article" date="1988" name="Biochim. Biophys. Acta">
        <title>Molecular cloning and nucleotide sequence of Thermus thermophilus HB8 trpE and trpG.</title>
        <authorList>
            <person name="Sato S."/>
            <person name="Nakada Y."/>
            <person name="Kanaya S."/>
            <person name="Tanaka T."/>
        </authorList>
    </citation>
    <scope>NUCLEOTIDE SEQUENCE [GENOMIC DNA]</scope>
</reference>
<reference key="2">
    <citation type="submission" date="2004-11" db="EMBL/GenBank/DDBJ databases">
        <title>Complete genome sequence of Thermus thermophilus HB8.</title>
        <authorList>
            <person name="Masui R."/>
            <person name="Kurokawa K."/>
            <person name="Nakagawa N."/>
            <person name="Tokunaga F."/>
            <person name="Koyama Y."/>
            <person name="Shibata T."/>
            <person name="Oshima T."/>
            <person name="Yokoyama S."/>
            <person name="Yasunaga T."/>
            <person name="Kuramitsu S."/>
        </authorList>
    </citation>
    <scope>NUCLEOTIDE SEQUENCE [LARGE SCALE GENOMIC DNA]</scope>
    <source>
        <strain>ATCC 27634 / DSM 579 / HB8</strain>
    </source>
</reference>
<protein>
    <recommendedName>
        <fullName>Anthranilate synthase component 2</fullName>
        <shortName>AS</shortName>
        <shortName>ASII</shortName>
        <ecNumber>4.1.3.27</ecNumber>
    </recommendedName>
    <alternativeName>
        <fullName>Anthranilate synthase, GATase component</fullName>
    </alternativeName>
    <alternativeName>
        <fullName>Anthranilate synthase, glutamine amidotransferase component</fullName>
    </alternativeName>
</protein>
<name>TRPG_THET8</name>
<evidence type="ECO:0000250" key="1"/>
<evidence type="ECO:0000250" key="2">
    <source>
        <dbReference type="UniProtKB" id="P00900"/>
    </source>
</evidence>
<evidence type="ECO:0000255" key="3">
    <source>
        <dbReference type="PROSITE-ProRule" id="PRU00605"/>
    </source>
</evidence>
<keyword id="KW-0028">Amino-acid biosynthesis</keyword>
<keyword id="KW-0057">Aromatic amino acid biosynthesis</keyword>
<keyword id="KW-0315">Glutamine amidotransferase</keyword>
<keyword id="KW-0456">Lyase</keyword>
<keyword id="KW-1185">Reference proteome</keyword>
<keyword id="KW-0822">Tryptophan biosynthesis</keyword>